<evidence type="ECO:0000250" key="1"/>
<evidence type="ECO:0000250" key="2">
    <source>
        <dbReference type="UniProtKB" id="O15270"/>
    </source>
</evidence>
<evidence type="ECO:0000250" key="3">
    <source>
        <dbReference type="UniProtKB" id="P97363"/>
    </source>
</evidence>
<evidence type="ECO:0000255" key="4"/>
<evidence type="ECO:0000305" key="5"/>
<reference key="1">
    <citation type="journal article" date="1997" name="J. Biol. Chem.">
        <title>A mammalian homolog of the yeast LCB1 encodes a component of serine palmitoyltransferase, the enzyme catalyzing the first step in sphingolipid synthesis.</title>
        <authorList>
            <person name="Hanada K."/>
            <person name="Hara T."/>
            <person name="Nishijima M."/>
            <person name="Kuge O."/>
            <person name="Dickson R.C."/>
            <person name="Nagiec M.M."/>
        </authorList>
    </citation>
    <scope>NUCLEOTIDE SEQUENCE [MRNA]</scope>
    <source>
        <tissue>Ovary</tissue>
    </source>
</reference>
<protein>
    <recommendedName>
        <fullName evidence="5">Serine palmitoyltransferase 2</fullName>
        <ecNumber evidence="2">2.3.1.50</ecNumber>
    </recommendedName>
    <alternativeName>
        <fullName>Long chain base biosynthesis protein 2</fullName>
        <shortName>LCB 2</shortName>
    </alternativeName>
    <alternativeName>
        <fullName>Long chain base biosynthesis protein 2a</fullName>
        <shortName>LCB2a</shortName>
    </alternativeName>
    <alternativeName>
        <fullName>Serine-palmitoyl-CoA transferase 2</fullName>
        <shortName>SPT 2</shortName>
    </alternativeName>
</protein>
<feature type="chain" id="PRO_0000163857" description="Serine palmitoyltransferase 2">
    <location>
        <begin position="1"/>
        <end position="560"/>
    </location>
</feature>
<feature type="transmembrane region" description="Helical" evidence="4">
    <location>
        <begin position="65"/>
        <end position="85"/>
    </location>
</feature>
<feature type="modified residue" description="N6-(pyridoxal phosphate)lysine" evidence="1">
    <location>
        <position position="377"/>
    </location>
</feature>
<dbReference type="EC" id="2.3.1.50" evidence="2"/>
<dbReference type="EMBL" id="AF004830">
    <property type="protein sequence ID" value="AAC53504.1"/>
    <property type="molecule type" value="mRNA"/>
</dbReference>
<dbReference type="RefSeq" id="NP_001233609.1">
    <property type="nucleotide sequence ID" value="NM_001246680.1"/>
</dbReference>
<dbReference type="SMR" id="O54694"/>
<dbReference type="PaxDb" id="10029-NP_001233609.1"/>
<dbReference type="Ensembl" id="ENSCGRT00001014323.1">
    <property type="protein sequence ID" value="ENSCGRP00001010103.1"/>
    <property type="gene ID" value="ENSCGRG00001012086.1"/>
</dbReference>
<dbReference type="GeneID" id="100689415"/>
<dbReference type="KEGG" id="cge:100689415"/>
<dbReference type="CTD" id="9517"/>
<dbReference type="eggNOG" id="KOG1357">
    <property type="taxonomic scope" value="Eukaryota"/>
</dbReference>
<dbReference type="GeneTree" id="ENSGT00940000155786"/>
<dbReference type="OrthoDB" id="65434at2759"/>
<dbReference type="UniPathway" id="UPA00222"/>
<dbReference type="Proteomes" id="UP000694386">
    <property type="component" value="Unplaced"/>
</dbReference>
<dbReference type="Proteomes" id="UP001108280">
    <property type="component" value="Chromosome 5"/>
</dbReference>
<dbReference type="GO" id="GO:0005789">
    <property type="term" value="C:endoplasmic reticulum membrane"/>
    <property type="evidence" value="ECO:0007669"/>
    <property type="project" value="UniProtKB-SubCell"/>
</dbReference>
<dbReference type="GO" id="GO:0017059">
    <property type="term" value="C:serine palmitoyltransferase complex"/>
    <property type="evidence" value="ECO:0007669"/>
    <property type="project" value="Ensembl"/>
</dbReference>
<dbReference type="GO" id="GO:0030170">
    <property type="term" value="F:pyridoxal phosphate binding"/>
    <property type="evidence" value="ECO:0007669"/>
    <property type="project" value="InterPro"/>
</dbReference>
<dbReference type="GO" id="GO:0004758">
    <property type="term" value="F:serine C-palmitoyltransferase activity"/>
    <property type="evidence" value="ECO:0007669"/>
    <property type="project" value="UniProtKB-EC"/>
</dbReference>
<dbReference type="GO" id="GO:0060612">
    <property type="term" value="P:adipose tissue development"/>
    <property type="evidence" value="ECO:0007669"/>
    <property type="project" value="Ensembl"/>
</dbReference>
<dbReference type="GO" id="GO:0046513">
    <property type="term" value="P:ceramide biosynthetic process"/>
    <property type="evidence" value="ECO:0007669"/>
    <property type="project" value="Ensembl"/>
</dbReference>
<dbReference type="GO" id="GO:1904504">
    <property type="term" value="P:positive regulation of lipophagy"/>
    <property type="evidence" value="ECO:0007669"/>
    <property type="project" value="Ensembl"/>
</dbReference>
<dbReference type="GO" id="GO:0046511">
    <property type="term" value="P:sphinganine biosynthetic process"/>
    <property type="evidence" value="ECO:0007669"/>
    <property type="project" value="Ensembl"/>
</dbReference>
<dbReference type="GO" id="GO:0006686">
    <property type="term" value="P:sphingomyelin biosynthetic process"/>
    <property type="evidence" value="ECO:0007669"/>
    <property type="project" value="Ensembl"/>
</dbReference>
<dbReference type="GO" id="GO:0046512">
    <property type="term" value="P:sphingosine biosynthetic process"/>
    <property type="evidence" value="ECO:0007669"/>
    <property type="project" value="Ensembl"/>
</dbReference>
<dbReference type="CDD" id="cd06454">
    <property type="entry name" value="KBL_like"/>
    <property type="match status" value="1"/>
</dbReference>
<dbReference type="FunFam" id="3.90.1150.10:FF:000004">
    <property type="entry name" value="2-amino-3-ketobutyrate coenzyme A ligase"/>
    <property type="match status" value="1"/>
</dbReference>
<dbReference type="FunFam" id="3.40.640.10:FF:000047">
    <property type="entry name" value="serine palmitoyltransferase 2 isoform X1"/>
    <property type="match status" value="1"/>
</dbReference>
<dbReference type="Gene3D" id="3.90.1150.10">
    <property type="entry name" value="Aspartate Aminotransferase, domain 1"/>
    <property type="match status" value="1"/>
</dbReference>
<dbReference type="Gene3D" id="3.40.640.10">
    <property type="entry name" value="Type I PLP-dependent aspartate aminotransferase-like (Major domain)"/>
    <property type="match status" value="1"/>
</dbReference>
<dbReference type="InterPro" id="IPR001917">
    <property type="entry name" value="Aminotrans_II_pyridoxalP_BS"/>
</dbReference>
<dbReference type="InterPro" id="IPR004839">
    <property type="entry name" value="Aminotransferase_I/II_large"/>
</dbReference>
<dbReference type="InterPro" id="IPR050087">
    <property type="entry name" value="AON_synthase_class-II"/>
</dbReference>
<dbReference type="InterPro" id="IPR015424">
    <property type="entry name" value="PyrdxlP-dep_Trfase"/>
</dbReference>
<dbReference type="InterPro" id="IPR015421">
    <property type="entry name" value="PyrdxlP-dep_Trfase_major"/>
</dbReference>
<dbReference type="InterPro" id="IPR015422">
    <property type="entry name" value="PyrdxlP-dep_Trfase_small"/>
</dbReference>
<dbReference type="PANTHER" id="PTHR13693">
    <property type="entry name" value="CLASS II AMINOTRANSFERASE/8-AMINO-7-OXONONANOATE SYNTHASE"/>
    <property type="match status" value="1"/>
</dbReference>
<dbReference type="PANTHER" id="PTHR13693:SF79">
    <property type="entry name" value="SERINE PALMITOYLTRANSFERASE 2"/>
    <property type="match status" value="1"/>
</dbReference>
<dbReference type="Pfam" id="PF00155">
    <property type="entry name" value="Aminotran_1_2"/>
    <property type="match status" value="1"/>
</dbReference>
<dbReference type="SUPFAM" id="SSF53383">
    <property type="entry name" value="PLP-dependent transferases"/>
    <property type="match status" value="1"/>
</dbReference>
<dbReference type="PROSITE" id="PS00599">
    <property type="entry name" value="AA_TRANSFER_CLASS_2"/>
    <property type="match status" value="1"/>
</dbReference>
<comment type="function">
    <text evidence="2 3">Component of the serine palmitoyltransferase multisubunit enzyme (SPT) that catalyzes the initial and rate-limiting step in sphingolipid biosynthesis by condensing L-serine and activated acyl-CoA (most commonly palmitoyl-CoA) to form long-chain bases. The SPT complex is composed of SPTLC1, SPTLC2 or SPTLC3 and SPTSSA or SPTSSB. Within this complex, the heterodimer consisting of SPTLC1 and SPTLC2/SPTLC3 forms the catalytic core. The composition of the serine palmitoyltransferase (SPT) complex determines the substrate preference. The SPTLC1-SPTLC2-SPTSSA complex shows a strong preference for C16-CoA substrate, while the SPTLC1-SPTLC3-SPTSSA isozyme uses both C14-CoA and C16-CoA as substrates, with a slight preference for C14-CoA. The SPTLC1-SPTLC2-SPTSSB complex shows a strong preference for C18-CoA substrate, while the SPTLC1-SPTLC3-SPTSSB isozyme displays an ability to use a broader range of acyl-CoAs, without apparent preference (By similarity). Crucial for adipogenesis (By similarity).</text>
</comment>
<comment type="catalytic activity">
    <reaction evidence="2">
        <text>L-serine + hexadecanoyl-CoA + H(+) = 3-oxosphinganine + CO2 + CoA</text>
        <dbReference type="Rhea" id="RHEA:14761"/>
        <dbReference type="ChEBI" id="CHEBI:15378"/>
        <dbReference type="ChEBI" id="CHEBI:16526"/>
        <dbReference type="ChEBI" id="CHEBI:33384"/>
        <dbReference type="ChEBI" id="CHEBI:57287"/>
        <dbReference type="ChEBI" id="CHEBI:57379"/>
        <dbReference type="ChEBI" id="CHEBI:58299"/>
        <dbReference type="EC" id="2.3.1.50"/>
    </reaction>
    <physiologicalReaction direction="left-to-right" evidence="2">
        <dbReference type="Rhea" id="RHEA:14762"/>
    </physiologicalReaction>
</comment>
<comment type="catalytic activity">
    <reaction evidence="2">
        <text>octadecanoyl-CoA + L-serine + H(+) = 3-oxoeicosasphinganine + CO2 + CoA</text>
        <dbReference type="Rhea" id="RHEA:33683"/>
        <dbReference type="ChEBI" id="CHEBI:15378"/>
        <dbReference type="ChEBI" id="CHEBI:16526"/>
        <dbReference type="ChEBI" id="CHEBI:33384"/>
        <dbReference type="ChEBI" id="CHEBI:57287"/>
        <dbReference type="ChEBI" id="CHEBI:57394"/>
        <dbReference type="ChEBI" id="CHEBI:65073"/>
    </reaction>
    <physiologicalReaction direction="left-to-right" evidence="2">
        <dbReference type="Rhea" id="RHEA:33684"/>
    </physiologicalReaction>
</comment>
<comment type="cofactor">
    <cofactor evidence="1">
        <name>pyridoxal 5'-phosphate</name>
        <dbReference type="ChEBI" id="CHEBI:597326"/>
    </cofactor>
</comment>
<comment type="activity regulation">
    <text evidence="2">SPT complex catalytic activity is negatively regulated by ORMDL proteins, including ORMDL3, in the presence of ceramides. This mechanism allows to maintain ceramide levels at sufficient concentrations for the production of complex sphingolipids, but which prevents the accumulation of ceramides to levels that trigger apoptosis.</text>
</comment>
<comment type="pathway">
    <text>Lipid metabolism; sphingolipid metabolism.</text>
</comment>
<comment type="subunit">
    <text evidence="2">Component of the serine palmitoyltransferase (SPT) complex, which is composed of SPTLC1, SPTLC2 or SPTLC3 and SPTSSA or SPTSSB. The heterodimer consisting of SPTLC1 and SPTLC2/SPTLC3 forms the catalytic core of the enzyme, while SPTSSA or SPTSSB subunits determine substrate specificity. SPT also interacts with ORMDL proteins, especially ORMDL3, which negatively regulate SPT activity in the presence of ceramides. Forms dimers of heterodimers with SPTLC1.</text>
</comment>
<comment type="subcellular location">
    <subcellularLocation>
        <location evidence="3">Endoplasmic reticulum membrane</location>
        <topology evidence="3">Single-pass membrane protein</topology>
    </subcellularLocation>
</comment>
<comment type="similarity">
    <text evidence="5">Belongs to the class-II pyridoxal-phosphate-dependent aminotransferase family.</text>
</comment>
<sequence length="560" mass="62882">MRPEPGGCCCRRPLRANGCVKNGEVRNGYVRSSTATAAAAGQIHHVTENGGLYKRPFNEVFEETPMLVAVLTYVGYGVLTLFGYLRDFLRHWRIEKCHHATEREEQKDFVSLYQDFENFYTRNLYMRIRDNWNRPICSVPGARVDIMERQSHDYNWSFKYTGNIIKGVINMGSYNYLGFARNTGSCQEAAAEVLKEYGAGVCSTRQEIGNLDKHEELEKLVARFLGVEAAMTYGMGFATNSMNIPALVGKGCLILSDELNHASLVLGARLSGATIRIFKHNNMQSLEKLLKDAIVYGQPRTRRPWKKILILVEGIYSMEGSIVRLPEVIALKKKYKAYLYLDEAHSIGALGPSGRGVVDYFGLDPEDVDVMMGTFTKSFGASGGYIGGKKALIDYLRTHSHSAVYATSMSPPVMEQIITSMKCIMGQDGTSLGKECVQQLAENTKYFRRRLKEMGFIIYGNEDSPVVPLMLYMPAKIGAFGREMLKRNVGVVVVGFPATPIIESRARFCLSAAHTKEILDTALKEIDEVGDLLQLKYSRRRLVPLLDRPFDETTYEETED</sequence>
<keyword id="KW-0012">Acyltransferase</keyword>
<keyword id="KW-0256">Endoplasmic reticulum</keyword>
<keyword id="KW-0443">Lipid metabolism</keyword>
<keyword id="KW-0472">Membrane</keyword>
<keyword id="KW-0663">Pyridoxal phosphate</keyword>
<keyword id="KW-0746">Sphingolipid metabolism</keyword>
<keyword id="KW-0808">Transferase</keyword>
<keyword id="KW-0812">Transmembrane</keyword>
<keyword id="KW-1133">Transmembrane helix</keyword>
<name>SPTC2_CRIGR</name>
<organism>
    <name type="scientific">Cricetulus griseus</name>
    <name type="common">Chinese hamster</name>
    <name type="synonym">Cricetulus barabensis griseus</name>
    <dbReference type="NCBI Taxonomy" id="10029"/>
    <lineage>
        <taxon>Eukaryota</taxon>
        <taxon>Metazoa</taxon>
        <taxon>Chordata</taxon>
        <taxon>Craniata</taxon>
        <taxon>Vertebrata</taxon>
        <taxon>Euteleostomi</taxon>
        <taxon>Mammalia</taxon>
        <taxon>Eutheria</taxon>
        <taxon>Euarchontoglires</taxon>
        <taxon>Glires</taxon>
        <taxon>Rodentia</taxon>
        <taxon>Myomorpha</taxon>
        <taxon>Muroidea</taxon>
        <taxon>Cricetidae</taxon>
        <taxon>Cricetinae</taxon>
        <taxon>Cricetulus</taxon>
    </lineage>
</organism>
<accession>O54694</accession>
<proteinExistence type="evidence at transcript level"/>
<gene>
    <name type="primary">SPTLC2</name>
    <name type="synonym">LCB2</name>
</gene>